<name>TXC6B_CUPSA</name>
<comment type="subcellular location">
    <subcellularLocation>
        <location evidence="1">Secreted</location>
    </subcellularLocation>
</comment>
<comment type="tissue specificity">
    <text evidence="5">Expressed by the venom gland.</text>
</comment>
<comment type="mass spectrometry"/>
<comment type="similarity">
    <text evidence="4">Belongs to the cationic peptide 04 (cupiennin) family. 09 subfamily.</text>
</comment>
<sequence>FANTIRLLINKVREWKNKQSS</sequence>
<reference key="1">
    <citation type="journal article" date="2012" name="FEBS J.">
        <title>Multicomponent venom of the spider Cupiennius salei: a bioanalytical investigation applying different strategies.</title>
        <authorList>
            <person name="Trachsel C."/>
            <person name="Siegemund D."/>
            <person name="Kampfer U."/>
            <person name="Kopp L.S."/>
            <person name="Buhr C."/>
            <person name="Grossmann J."/>
            <person name="Luthi C."/>
            <person name="Cunningham M."/>
            <person name="Nentwig W."/>
            <person name="Kuhn-Nentwig L."/>
            <person name="Schurch S."/>
            <person name="Schaller J."/>
        </authorList>
    </citation>
    <scope>PROTEIN SEQUENCE</scope>
    <scope>MASS SPECTROMETRY</scope>
    <scope>AMIDATION AT SER-21</scope>
    <source>
        <tissue>Venom</tissue>
    </source>
</reference>
<reference key="2">
    <citation type="unpublished observations" date="2015-06">
        <authorList>
            <person name="Kuhn-Nentwig L."/>
            <person name="Gohel T."/>
        </authorList>
    </citation>
    <scope>NOMENCLATURE</scope>
</reference>
<keyword id="KW-0027">Amidation</keyword>
<keyword id="KW-0903">Direct protein sequencing</keyword>
<keyword id="KW-0964">Secreted</keyword>
<keyword id="KW-0800">Toxin</keyword>
<accession>B3EWW6</accession>
<dbReference type="GO" id="GO:0005576">
    <property type="term" value="C:extracellular region"/>
    <property type="evidence" value="ECO:0007669"/>
    <property type="project" value="UniProtKB-SubCell"/>
</dbReference>
<dbReference type="GO" id="GO:0090729">
    <property type="term" value="F:toxin activity"/>
    <property type="evidence" value="ECO:0007669"/>
    <property type="project" value="UniProtKB-KW"/>
</dbReference>
<protein>
    <recommendedName>
        <fullName evidence="3">Cupiennin-6b</fullName>
        <shortName evidence="3">Cu-6b</shortName>
    </recommendedName>
    <alternativeName>
        <fullName evidence="2">Short cationic peptide-6b</fullName>
        <shortName evidence="2">SCP-6b</shortName>
    </alternativeName>
</protein>
<evidence type="ECO:0000269" key="1">
    <source>
    </source>
</evidence>
<evidence type="ECO:0000303" key="2">
    <source>
    </source>
</evidence>
<evidence type="ECO:0000303" key="3">
    <source ref="2"/>
</evidence>
<evidence type="ECO:0000305" key="4"/>
<evidence type="ECO:0000305" key="5">
    <source>
    </source>
</evidence>
<organism>
    <name type="scientific">Cupiennius salei</name>
    <name type="common">American wandering spider</name>
    <dbReference type="NCBI Taxonomy" id="6928"/>
    <lineage>
        <taxon>Eukaryota</taxon>
        <taxon>Metazoa</taxon>
        <taxon>Ecdysozoa</taxon>
        <taxon>Arthropoda</taxon>
        <taxon>Chelicerata</taxon>
        <taxon>Arachnida</taxon>
        <taxon>Araneae</taxon>
        <taxon>Araneomorphae</taxon>
        <taxon>Entelegynae</taxon>
        <taxon>Lycosoidea</taxon>
        <taxon>Ctenidae</taxon>
        <taxon>Cupiennius</taxon>
    </lineage>
</organism>
<feature type="peptide" id="PRO_0000421225" description="Cupiennin-6b" evidence="1">
    <location>
        <begin position="1"/>
        <end position="21"/>
    </location>
</feature>
<feature type="modified residue" description="Serine amide" evidence="1">
    <location>
        <position position="21"/>
    </location>
</feature>
<proteinExistence type="evidence at protein level"/>